<feature type="chain" id="PRO_0000203594" description="Alpha-amylase inhibitor Z-2685">
    <location>
        <begin position="1"/>
        <end position="76"/>
    </location>
</feature>
<feature type="disulfide bond" evidence="1">
    <location>
        <begin position="9"/>
        <end position="25"/>
    </location>
</feature>
<feature type="disulfide bond" evidence="1">
    <location>
        <begin position="43"/>
        <end position="70"/>
    </location>
</feature>
<feature type="strand" evidence="2">
    <location>
        <begin position="5"/>
        <end position="9"/>
    </location>
</feature>
<feature type="strand" evidence="2">
    <location>
        <begin position="11"/>
        <end position="14"/>
    </location>
</feature>
<feature type="strand" evidence="2">
    <location>
        <begin position="16"/>
        <end position="22"/>
    </location>
</feature>
<feature type="strand" evidence="2">
    <location>
        <begin position="25"/>
        <end position="27"/>
    </location>
</feature>
<feature type="strand" evidence="2">
    <location>
        <begin position="29"/>
        <end position="37"/>
    </location>
</feature>
<feature type="strand" evidence="2">
    <location>
        <begin position="44"/>
        <end position="46"/>
    </location>
</feature>
<feature type="strand" evidence="2">
    <location>
        <begin position="53"/>
        <end position="55"/>
    </location>
</feature>
<feature type="strand" evidence="2">
    <location>
        <begin position="64"/>
        <end position="69"/>
    </location>
</feature>
<proteinExistence type="evidence at protein level"/>
<name>IAA_STRRO</name>
<sequence length="76" mass="8130">ATGSPVAECVEYFQSWRYTDVHNGCADAVSVTVEYTHGQWAPCRVIEPGGWATFAGYGTDGNYVTGLHTCDPATPS</sequence>
<reference key="1">
    <citation type="journal article" date="1985" name="Biol. Chem. Hoppe-Seyler">
        <title>The primary structure of alpha-amylase inhibitor Z-2685 from Streptomyces parvullus FH-1641. Sequence homology between inhibitor and alpha-amylase.</title>
        <authorList>
            <person name="Hofmann O."/>
            <person name="Vertesy L."/>
            <person name="Braunitzer G."/>
        </authorList>
    </citation>
    <scope>PROTEIN SEQUENCE</scope>
</reference>
<organism>
    <name type="scientific">Streptomyces rochei</name>
    <name type="common">Streptomyces parvullus</name>
    <dbReference type="NCBI Taxonomy" id="1928"/>
    <lineage>
        <taxon>Bacteria</taxon>
        <taxon>Bacillati</taxon>
        <taxon>Actinomycetota</taxon>
        <taxon>Actinomycetes</taxon>
        <taxon>Kitasatosporales</taxon>
        <taxon>Streptomycetaceae</taxon>
        <taxon>Streptomyces</taxon>
        <taxon>Streptomyces rochei group</taxon>
    </lineage>
</organism>
<dbReference type="PIR" id="A24694">
    <property type="entry name" value="A24694"/>
</dbReference>
<dbReference type="PDB" id="2KER">
    <property type="method" value="NMR"/>
    <property type="chains" value="A=1-76"/>
</dbReference>
<dbReference type="PDBsum" id="2KER"/>
<dbReference type="BMRB" id="P07512"/>
<dbReference type="SMR" id="P07512"/>
<dbReference type="EvolutionaryTrace" id="P07512"/>
<dbReference type="GO" id="GO:0015066">
    <property type="term" value="F:alpha-amylase inhibitor activity"/>
    <property type="evidence" value="ECO:0007669"/>
    <property type="project" value="UniProtKB-KW"/>
</dbReference>
<dbReference type="Gene3D" id="2.60.40.20">
    <property type="entry name" value="Alpha-amylase inhibitor"/>
    <property type="match status" value="1"/>
</dbReference>
<dbReference type="InterPro" id="IPR000833">
    <property type="entry name" value="A-amylase_inhib"/>
</dbReference>
<dbReference type="InterPro" id="IPR036379">
    <property type="entry name" value="A-amylase_inhib_sf"/>
</dbReference>
<dbReference type="Pfam" id="PF01356">
    <property type="entry name" value="A_amylase_inhib"/>
    <property type="match status" value="1"/>
</dbReference>
<dbReference type="PIRSF" id="PIRSF001658">
    <property type="entry name" value="Amylase_inhib"/>
    <property type="match status" value="1"/>
</dbReference>
<dbReference type="SMART" id="SM00783">
    <property type="entry name" value="A_amylase_inhib"/>
    <property type="match status" value="1"/>
</dbReference>
<dbReference type="SUPFAM" id="SSF49498">
    <property type="entry name" value="alpha-Amylase inhibitor tendamistat"/>
    <property type="match status" value="1"/>
</dbReference>
<evidence type="ECO:0000250" key="1"/>
<evidence type="ECO:0007829" key="2">
    <source>
        <dbReference type="PDB" id="2KER"/>
    </source>
</evidence>
<accession>P07512</accession>
<keyword id="KW-0002">3D-structure</keyword>
<keyword id="KW-0022">Alpha-amylase inhibitor</keyword>
<keyword id="KW-0903">Direct protein sequencing</keyword>
<keyword id="KW-1015">Disulfide bond</keyword>
<protein>
    <recommendedName>
        <fullName>Alpha-amylase inhibitor Z-2685</fullName>
    </recommendedName>
</protein>
<comment type="function">
    <text>Inhibits mammalian alpha-amylases specifically but has no action on plant and microbial alpha-amylases.</text>
</comment>